<sequence length="314" mass="34827">MEWSEVEVHTTNEAVEPVANVLTEFGAAGVSIEDVADFLREREDKFGEIYALKREDYPEDGVIIKAYFLKTTEFVEQIPEIEQTLKNLTTFDIPLGKFQFVVNDVDDEEWATAWKKYYHPVQITDRITIVPSWESYTPSANEIIIELDPGMAFGTGTHPTTQLCIRALSDYLQPGDELIDVGTGSGVLSIASAKLGAKSILATDLDEIATRAAEENIRLNKTENIITVKQNNLLQDINKSDVDIVVANILAEVILLFPEDVYKALKPGGIFIASGIIEDKAKVVEEALKNAGLIIEKIEQQGDWVAIISKRGVE</sequence>
<evidence type="ECO:0000255" key="1">
    <source>
        <dbReference type="HAMAP-Rule" id="MF_00735"/>
    </source>
</evidence>
<keyword id="KW-0963">Cytoplasm</keyword>
<keyword id="KW-0489">Methyltransferase</keyword>
<keyword id="KW-0949">S-adenosyl-L-methionine</keyword>
<keyword id="KW-0808">Transferase</keyword>
<feature type="chain" id="PRO_0000192277" description="Ribosomal protein L11 methyltransferase">
    <location>
        <begin position="1"/>
        <end position="314"/>
    </location>
</feature>
<feature type="binding site" evidence="1">
    <location>
        <position position="161"/>
    </location>
    <ligand>
        <name>S-adenosyl-L-methionine</name>
        <dbReference type="ChEBI" id="CHEBI:59789"/>
    </ligand>
</feature>
<feature type="binding site" evidence="1">
    <location>
        <position position="182"/>
    </location>
    <ligand>
        <name>S-adenosyl-L-methionine</name>
        <dbReference type="ChEBI" id="CHEBI:59789"/>
    </ligand>
</feature>
<feature type="binding site" evidence="1">
    <location>
        <position position="204"/>
    </location>
    <ligand>
        <name>S-adenosyl-L-methionine</name>
        <dbReference type="ChEBI" id="CHEBI:59789"/>
    </ligand>
</feature>
<feature type="binding site" evidence="1">
    <location>
        <position position="248"/>
    </location>
    <ligand>
        <name>S-adenosyl-L-methionine</name>
        <dbReference type="ChEBI" id="CHEBI:59789"/>
    </ligand>
</feature>
<dbReference type="EC" id="2.1.1.-" evidence="1"/>
<dbReference type="EMBL" id="AL596168">
    <property type="protein sequence ID" value="CAC96739.1"/>
    <property type="molecule type" value="Genomic_DNA"/>
</dbReference>
<dbReference type="PIR" id="AC1621">
    <property type="entry name" value="AC1621"/>
</dbReference>
<dbReference type="RefSeq" id="WP_010991567.1">
    <property type="nucleotide sequence ID" value="NC_003212.1"/>
</dbReference>
<dbReference type="SMR" id="Q92BP0"/>
<dbReference type="STRING" id="272626.gene:17565839"/>
<dbReference type="GeneID" id="93234889"/>
<dbReference type="KEGG" id="lin:lin1508"/>
<dbReference type="eggNOG" id="COG2264">
    <property type="taxonomic scope" value="Bacteria"/>
</dbReference>
<dbReference type="HOGENOM" id="CLU_049382_0_1_9"/>
<dbReference type="OrthoDB" id="9785995at2"/>
<dbReference type="Proteomes" id="UP000002513">
    <property type="component" value="Chromosome"/>
</dbReference>
<dbReference type="GO" id="GO:0005737">
    <property type="term" value="C:cytoplasm"/>
    <property type="evidence" value="ECO:0007669"/>
    <property type="project" value="UniProtKB-SubCell"/>
</dbReference>
<dbReference type="GO" id="GO:0016279">
    <property type="term" value="F:protein-lysine N-methyltransferase activity"/>
    <property type="evidence" value="ECO:0007669"/>
    <property type="project" value="RHEA"/>
</dbReference>
<dbReference type="GO" id="GO:0032259">
    <property type="term" value="P:methylation"/>
    <property type="evidence" value="ECO:0007669"/>
    <property type="project" value="UniProtKB-KW"/>
</dbReference>
<dbReference type="CDD" id="cd02440">
    <property type="entry name" value="AdoMet_MTases"/>
    <property type="match status" value="1"/>
</dbReference>
<dbReference type="Gene3D" id="3.40.50.150">
    <property type="entry name" value="Vaccinia Virus protein VP39"/>
    <property type="match status" value="1"/>
</dbReference>
<dbReference type="HAMAP" id="MF_00735">
    <property type="entry name" value="Methyltr_PrmA"/>
    <property type="match status" value="1"/>
</dbReference>
<dbReference type="InterPro" id="IPR050078">
    <property type="entry name" value="Ribosomal_L11_MeTrfase_PrmA"/>
</dbReference>
<dbReference type="InterPro" id="IPR004498">
    <property type="entry name" value="Ribosomal_PrmA_MeTrfase"/>
</dbReference>
<dbReference type="InterPro" id="IPR029063">
    <property type="entry name" value="SAM-dependent_MTases_sf"/>
</dbReference>
<dbReference type="NCBIfam" id="TIGR00406">
    <property type="entry name" value="prmA"/>
    <property type="match status" value="1"/>
</dbReference>
<dbReference type="PANTHER" id="PTHR43648">
    <property type="entry name" value="ELECTRON TRANSFER FLAVOPROTEIN BETA SUBUNIT LYSINE METHYLTRANSFERASE"/>
    <property type="match status" value="1"/>
</dbReference>
<dbReference type="PANTHER" id="PTHR43648:SF1">
    <property type="entry name" value="ELECTRON TRANSFER FLAVOPROTEIN BETA SUBUNIT LYSINE METHYLTRANSFERASE"/>
    <property type="match status" value="1"/>
</dbReference>
<dbReference type="Pfam" id="PF06325">
    <property type="entry name" value="PrmA"/>
    <property type="match status" value="1"/>
</dbReference>
<dbReference type="PIRSF" id="PIRSF000401">
    <property type="entry name" value="RPL11_MTase"/>
    <property type="match status" value="1"/>
</dbReference>
<dbReference type="SUPFAM" id="SSF53335">
    <property type="entry name" value="S-adenosyl-L-methionine-dependent methyltransferases"/>
    <property type="match status" value="1"/>
</dbReference>
<gene>
    <name evidence="1" type="primary">prmA</name>
    <name type="ordered locus">lin1508</name>
</gene>
<protein>
    <recommendedName>
        <fullName evidence="1">Ribosomal protein L11 methyltransferase</fullName>
        <shortName evidence="1">L11 Mtase</shortName>
        <ecNumber evidence="1">2.1.1.-</ecNumber>
    </recommendedName>
</protein>
<comment type="function">
    <text evidence="1">Methylates ribosomal protein L11.</text>
</comment>
<comment type="catalytic activity">
    <reaction evidence="1">
        <text>L-lysyl-[protein] + 3 S-adenosyl-L-methionine = N(6),N(6),N(6)-trimethyl-L-lysyl-[protein] + 3 S-adenosyl-L-homocysteine + 3 H(+)</text>
        <dbReference type="Rhea" id="RHEA:54192"/>
        <dbReference type="Rhea" id="RHEA-COMP:9752"/>
        <dbReference type="Rhea" id="RHEA-COMP:13826"/>
        <dbReference type="ChEBI" id="CHEBI:15378"/>
        <dbReference type="ChEBI" id="CHEBI:29969"/>
        <dbReference type="ChEBI" id="CHEBI:57856"/>
        <dbReference type="ChEBI" id="CHEBI:59789"/>
        <dbReference type="ChEBI" id="CHEBI:61961"/>
    </reaction>
</comment>
<comment type="subcellular location">
    <subcellularLocation>
        <location evidence="1">Cytoplasm</location>
    </subcellularLocation>
</comment>
<comment type="similarity">
    <text evidence="1">Belongs to the methyltransferase superfamily. PrmA family.</text>
</comment>
<proteinExistence type="inferred from homology"/>
<name>PRMA_LISIN</name>
<accession>Q92BP0</accession>
<reference key="1">
    <citation type="journal article" date="2001" name="Science">
        <title>Comparative genomics of Listeria species.</title>
        <authorList>
            <person name="Glaser P."/>
            <person name="Frangeul L."/>
            <person name="Buchrieser C."/>
            <person name="Rusniok C."/>
            <person name="Amend A."/>
            <person name="Baquero F."/>
            <person name="Berche P."/>
            <person name="Bloecker H."/>
            <person name="Brandt P."/>
            <person name="Chakraborty T."/>
            <person name="Charbit A."/>
            <person name="Chetouani F."/>
            <person name="Couve E."/>
            <person name="de Daruvar A."/>
            <person name="Dehoux P."/>
            <person name="Domann E."/>
            <person name="Dominguez-Bernal G."/>
            <person name="Duchaud E."/>
            <person name="Durant L."/>
            <person name="Dussurget O."/>
            <person name="Entian K.-D."/>
            <person name="Fsihi H."/>
            <person name="Garcia-del Portillo F."/>
            <person name="Garrido P."/>
            <person name="Gautier L."/>
            <person name="Goebel W."/>
            <person name="Gomez-Lopez N."/>
            <person name="Hain T."/>
            <person name="Hauf J."/>
            <person name="Jackson D."/>
            <person name="Jones L.-M."/>
            <person name="Kaerst U."/>
            <person name="Kreft J."/>
            <person name="Kuhn M."/>
            <person name="Kunst F."/>
            <person name="Kurapkat G."/>
            <person name="Madueno E."/>
            <person name="Maitournam A."/>
            <person name="Mata Vicente J."/>
            <person name="Ng E."/>
            <person name="Nedjari H."/>
            <person name="Nordsiek G."/>
            <person name="Novella S."/>
            <person name="de Pablos B."/>
            <person name="Perez-Diaz J.-C."/>
            <person name="Purcell R."/>
            <person name="Remmel B."/>
            <person name="Rose M."/>
            <person name="Schlueter T."/>
            <person name="Simoes N."/>
            <person name="Tierrez A."/>
            <person name="Vazquez-Boland J.-A."/>
            <person name="Voss H."/>
            <person name="Wehland J."/>
            <person name="Cossart P."/>
        </authorList>
    </citation>
    <scope>NUCLEOTIDE SEQUENCE [LARGE SCALE GENOMIC DNA]</scope>
    <source>
        <strain>ATCC BAA-680 / CLIP 11262</strain>
    </source>
</reference>
<organism>
    <name type="scientific">Listeria innocua serovar 6a (strain ATCC BAA-680 / CLIP 11262)</name>
    <dbReference type="NCBI Taxonomy" id="272626"/>
    <lineage>
        <taxon>Bacteria</taxon>
        <taxon>Bacillati</taxon>
        <taxon>Bacillota</taxon>
        <taxon>Bacilli</taxon>
        <taxon>Bacillales</taxon>
        <taxon>Listeriaceae</taxon>
        <taxon>Listeria</taxon>
    </lineage>
</organism>